<gene>
    <name type="ordered locus">NGR_a00260</name>
    <name type="ORF">y4bC</name>
</gene>
<gene>
    <name type="ordered locus">NGR_a02020</name>
    <name type="ORF">y4pJ</name>
</gene>
<reference key="1">
    <citation type="journal article" date="1997" name="Nature">
        <title>Molecular basis of symbiosis between Rhizobium and legumes.</title>
        <authorList>
            <person name="Freiberg C.A."/>
            <person name="Fellay R."/>
            <person name="Bairoch A."/>
            <person name="Broughton W.J."/>
            <person name="Rosenthal A."/>
            <person name="Perret X."/>
        </authorList>
    </citation>
    <scope>NUCLEOTIDE SEQUENCE [LARGE SCALE GENOMIC DNA]</scope>
    <source>
        <strain>NBRC 101917 / NGR234</strain>
    </source>
</reference>
<reference key="2">
    <citation type="journal article" date="2009" name="Appl. Environ. Microbiol.">
        <title>Rhizobium sp. strain NGR234 possesses a remarkable number of secretion systems.</title>
        <authorList>
            <person name="Schmeisser C."/>
            <person name="Liesegang H."/>
            <person name="Krysciak D."/>
            <person name="Bakkou N."/>
            <person name="Le Quere A."/>
            <person name="Wollherr A."/>
            <person name="Heinemeyer I."/>
            <person name="Morgenstern B."/>
            <person name="Pommerening-Roeser A."/>
            <person name="Flores M."/>
            <person name="Palacios R."/>
            <person name="Brenner S."/>
            <person name="Gottschalk G."/>
            <person name="Schmitz R.A."/>
            <person name="Broughton W.J."/>
            <person name="Perret X."/>
            <person name="Strittmatter A.W."/>
            <person name="Streit W.R."/>
        </authorList>
    </citation>
    <scope>NUCLEOTIDE SEQUENCE [LARGE SCALE GENOMIC DNA]</scope>
    <source>
        <strain>NBRC 101917 / NGR234</strain>
    </source>
</reference>
<feature type="chain" id="PRO_0000200805" description="Uncharacterized protein y4bC/y4pJ">
    <location>
        <begin position="1"/>
        <end position="149"/>
    </location>
</feature>
<geneLocation type="plasmid">
    <name>sym pNGR234a</name>
</geneLocation>
<accession>P55370</accession>
<keyword id="KW-0614">Plasmid</keyword>
<keyword id="KW-1185">Reference proteome</keyword>
<comment type="similarity">
    <text evidence="1">To Rhizobium NGR234A y4oM.</text>
</comment>
<protein>
    <recommendedName>
        <fullName>Uncharacterized protein y4bC/y4pJ</fullName>
    </recommendedName>
</protein>
<dbReference type="EMBL" id="U00090">
    <property type="protein sequence ID" value="AAB91619.1"/>
    <property type="molecule type" value="Genomic_DNA"/>
</dbReference>
<dbReference type="EMBL" id="U00090">
    <property type="protein sequence ID" value="AAB91820.1"/>
    <property type="molecule type" value="Genomic_DNA"/>
</dbReference>
<dbReference type="RefSeq" id="NP_443781.1">
    <property type="nucleotide sequence ID" value="NC_000914.2"/>
</dbReference>
<dbReference type="RefSeq" id="NP_444023.1">
    <property type="nucleotide sequence ID" value="NC_000914.2"/>
</dbReference>
<dbReference type="RefSeq" id="WP_010875068.1">
    <property type="nucleotide sequence ID" value="NC_000914.2"/>
</dbReference>
<dbReference type="RefSeq" id="YP_002822312.1">
    <property type="nucleotide sequence ID" value="NC_012586.1"/>
</dbReference>
<dbReference type="RefSeq" id="YP_002822374.1">
    <property type="nucleotide sequence ID" value="NC_012586.1"/>
</dbReference>
<dbReference type="RefSeq" id="YP_002823202.1">
    <property type="nucleotide sequence ID" value="NC_012586.1"/>
</dbReference>
<dbReference type="RefSeq" id="YP_002823712.1">
    <property type="nucleotide sequence ID" value="NC_012586.1"/>
</dbReference>
<dbReference type="RefSeq" id="YP_002823882.1">
    <property type="nucleotide sequence ID" value="NC_012586.1"/>
</dbReference>
<dbReference type="RefSeq" id="YP_002826118.1">
    <property type="nucleotide sequence ID" value="NC_012587.1"/>
</dbReference>
<dbReference type="SMR" id="P55370"/>
<dbReference type="STRING" id="394.NGR_c15990"/>
<dbReference type="KEGG" id="rhi:NGR_a00260"/>
<dbReference type="KEGG" id="rhi:NGR_a02020"/>
<dbReference type="eggNOG" id="COG3415">
    <property type="taxonomic scope" value="Bacteria"/>
</dbReference>
<dbReference type="HOGENOM" id="CLU_119065_0_0_5"/>
<dbReference type="OrthoDB" id="8683412at2"/>
<dbReference type="Proteomes" id="UP000001054">
    <property type="component" value="Plasmid pNGR234a"/>
</dbReference>
<dbReference type="InterPro" id="IPR009057">
    <property type="entry name" value="Homeodomain-like_sf"/>
</dbReference>
<dbReference type="InterPro" id="IPR055247">
    <property type="entry name" value="InsJ-like_HTH"/>
</dbReference>
<dbReference type="Pfam" id="PF13518">
    <property type="entry name" value="HTH_28"/>
    <property type="match status" value="1"/>
</dbReference>
<dbReference type="SUPFAM" id="SSF46689">
    <property type="entry name" value="Homeodomain-like"/>
    <property type="match status" value="1"/>
</dbReference>
<proteinExistence type="predicted"/>
<organism>
    <name type="scientific">Sinorhizobium fredii (strain NBRC 101917 / NGR234)</name>
    <dbReference type="NCBI Taxonomy" id="394"/>
    <lineage>
        <taxon>Bacteria</taxon>
        <taxon>Pseudomonadati</taxon>
        <taxon>Pseudomonadota</taxon>
        <taxon>Alphaproteobacteria</taxon>
        <taxon>Hyphomicrobiales</taxon>
        <taxon>Rhizobiaceae</taxon>
        <taxon>Sinorhizobium/Ensifer group</taxon>
        <taxon>Sinorhizobium</taxon>
    </lineage>
</organism>
<name>Y4BC_SINFN</name>
<evidence type="ECO:0000305" key="1"/>
<sequence length="149" mass="16836">MPNETKRERLRELGALNARPEAVRAPWFRESTFFDPLDLVQVKYEMLRHVQEDGVNKADAAALFGLSRPTYYQAEAAFERDGIAGLLPRTRGPKSAHKLTDEVMQLIEQNQHAGAPLQARSLAELLHSTLGISVHPRSIERAIARKKKR</sequence>